<reference key="1">
    <citation type="journal article" date="2000" name="Proc. Natl. Acad. Sci. U.S.A.">
        <title>TOM1, an Arabidopsis gene required for efficient multiplication of a tobamovirus, encodes a putative transmembrane protein.</title>
        <authorList>
            <person name="Yamanaka T."/>
            <person name="Ohta T."/>
            <person name="Takahashi M."/>
            <person name="Meshi T."/>
            <person name="Schmidt R."/>
            <person name="Dean C."/>
            <person name="Naito S."/>
            <person name="Ishikawa M."/>
        </authorList>
    </citation>
    <scope>NUCLEOTIDE SEQUENCE [GENOMIC DNA / MRNA]</scope>
    <scope>FUNCTION</scope>
    <scope>DISRUPTION PHENOTYPE</scope>
    <scope>SUBCELLULAR LOCATION</scope>
    <scope>SUBUNIT</scope>
    <scope>TOPOLOGY</scope>
    <source>
        <strain>cv. Columbia</strain>
        <strain>cv. Wassilewskija</strain>
    </source>
</reference>
<reference key="2">
    <citation type="journal article" date="1999" name="Nature">
        <title>Sequence and analysis of chromosome 4 of the plant Arabidopsis thaliana.</title>
        <authorList>
            <person name="Mayer K.F.X."/>
            <person name="Schueller C."/>
            <person name="Wambutt R."/>
            <person name="Murphy G."/>
            <person name="Volckaert G."/>
            <person name="Pohl T."/>
            <person name="Duesterhoeft A."/>
            <person name="Stiekema W."/>
            <person name="Entian K.-D."/>
            <person name="Terryn N."/>
            <person name="Harris B."/>
            <person name="Ansorge W."/>
            <person name="Brandt P."/>
            <person name="Grivell L.A."/>
            <person name="Rieger M."/>
            <person name="Weichselgartner M."/>
            <person name="de Simone V."/>
            <person name="Obermaier B."/>
            <person name="Mache R."/>
            <person name="Mueller M."/>
            <person name="Kreis M."/>
            <person name="Delseny M."/>
            <person name="Puigdomenech P."/>
            <person name="Watson M."/>
            <person name="Schmidtheini T."/>
            <person name="Reichert B."/>
            <person name="Portetelle D."/>
            <person name="Perez-Alonso M."/>
            <person name="Boutry M."/>
            <person name="Bancroft I."/>
            <person name="Vos P."/>
            <person name="Hoheisel J."/>
            <person name="Zimmermann W."/>
            <person name="Wedler H."/>
            <person name="Ridley P."/>
            <person name="Langham S.-A."/>
            <person name="McCullagh B."/>
            <person name="Bilham L."/>
            <person name="Robben J."/>
            <person name="van der Schueren J."/>
            <person name="Grymonprez B."/>
            <person name="Chuang Y.-J."/>
            <person name="Vandenbussche F."/>
            <person name="Braeken M."/>
            <person name="Weltjens I."/>
            <person name="Voet M."/>
            <person name="Bastiaens I."/>
            <person name="Aert R."/>
            <person name="Defoor E."/>
            <person name="Weitzenegger T."/>
            <person name="Bothe G."/>
            <person name="Ramsperger U."/>
            <person name="Hilbert H."/>
            <person name="Braun M."/>
            <person name="Holzer E."/>
            <person name="Brandt A."/>
            <person name="Peters S."/>
            <person name="van Staveren M."/>
            <person name="Dirkse W."/>
            <person name="Mooijman P."/>
            <person name="Klein Lankhorst R."/>
            <person name="Rose M."/>
            <person name="Hauf J."/>
            <person name="Koetter P."/>
            <person name="Berneiser S."/>
            <person name="Hempel S."/>
            <person name="Feldpausch M."/>
            <person name="Lamberth S."/>
            <person name="Van den Daele H."/>
            <person name="De Keyser A."/>
            <person name="Buysshaert C."/>
            <person name="Gielen J."/>
            <person name="Villarroel R."/>
            <person name="De Clercq R."/>
            <person name="van Montagu M."/>
            <person name="Rogers J."/>
            <person name="Cronin A."/>
            <person name="Quail M.A."/>
            <person name="Bray-Allen S."/>
            <person name="Clark L."/>
            <person name="Doggett J."/>
            <person name="Hall S."/>
            <person name="Kay M."/>
            <person name="Lennard N."/>
            <person name="McLay K."/>
            <person name="Mayes R."/>
            <person name="Pettett A."/>
            <person name="Rajandream M.A."/>
            <person name="Lyne M."/>
            <person name="Benes V."/>
            <person name="Rechmann S."/>
            <person name="Borkova D."/>
            <person name="Bloecker H."/>
            <person name="Scharfe M."/>
            <person name="Grimm M."/>
            <person name="Loehnert T.-H."/>
            <person name="Dose S."/>
            <person name="de Haan M."/>
            <person name="Maarse A.C."/>
            <person name="Schaefer M."/>
            <person name="Mueller-Auer S."/>
            <person name="Gabel C."/>
            <person name="Fuchs M."/>
            <person name="Fartmann B."/>
            <person name="Granderath K."/>
            <person name="Dauner D."/>
            <person name="Herzl A."/>
            <person name="Neumann S."/>
            <person name="Argiriou A."/>
            <person name="Vitale D."/>
            <person name="Liguori R."/>
            <person name="Piravandi E."/>
            <person name="Massenet O."/>
            <person name="Quigley F."/>
            <person name="Clabauld G."/>
            <person name="Muendlein A."/>
            <person name="Felber R."/>
            <person name="Schnabl S."/>
            <person name="Hiller R."/>
            <person name="Schmidt W."/>
            <person name="Lecharny A."/>
            <person name="Aubourg S."/>
            <person name="Chefdor F."/>
            <person name="Cooke R."/>
            <person name="Berger C."/>
            <person name="Monfort A."/>
            <person name="Casacuberta E."/>
            <person name="Gibbons T."/>
            <person name="Weber N."/>
            <person name="Vandenbol M."/>
            <person name="Bargues M."/>
            <person name="Terol J."/>
            <person name="Torres A."/>
            <person name="Perez-Perez A."/>
            <person name="Purnelle B."/>
            <person name="Bent E."/>
            <person name="Johnson S."/>
            <person name="Tacon D."/>
            <person name="Jesse T."/>
            <person name="Heijnen L."/>
            <person name="Schwarz S."/>
            <person name="Scholler P."/>
            <person name="Heber S."/>
            <person name="Francs P."/>
            <person name="Bielke C."/>
            <person name="Frishman D."/>
            <person name="Haase D."/>
            <person name="Lemcke K."/>
            <person name="Mewes H.-W."/>
            <person name="Stocker S."/>
            <person name="Zaccaria P."/>
            <person name="Bevan M."/>
            <person name="Wilson R.K."/>
            <person name="de la Bastide M."/>
            <person name="Habermann K."/>
            <person name="Parnell L."/>
            <person name="Dedhia N."/>
            <person name="Gnoj L."/>
            <person name="Schutz K."/>
            <person name="Huang E."/>
            <person name="Spiegel L."/>
            <person name="Sekhon M."/>
            <person name="Murray J."/>
            <person name="Sheet P."/>
            <person name="Cordes M."/>
            <person name="Abu-Threideh J."/>
            <person name="Stoneking T."/>
            <person name="Kalicki J."/>
            <person name="Graves T."/>
            <person name="Harmon G."/>
            <person name="Edwards J."/>
            <person name="Latreille P."/>
            <person name="Courtney L."/>
            <person name="Cloud J."/>
            <person name="Abbott A."/>
            <person name="Scott K."/>
            <person name="Johnson D."/>
            <person name="Minx P."/>
            <person name="Bentley D."/>
            <person name="Fulton B."/>
            <person name="Miller N."/>
            <person name="Greco T."/>
            <person name="Kemp K."/>
            <person name="Kramer J."/>
            <person name="Fulton L."/>
            <person name="Mardis E."/>
            <person name="Dante M."/>
            <person name="Pepin K."/>
            <person name="Hillier L.W."/>
            <person name="Nelson J."/>
            <person name="Spieth J."/>
            <person name="Ryan E."/>
            <person name="Andrews S."/>
            <person name="Geisel C."/>
            <person name="Layman D."/>
            <person name="Du H."/>
            <person name="Ali J."/>
            <person name="Berghoff A."/>
            <person name="Jones K."/>
            <person name="Drone K."/>
            <person name="Cotton M."/>
            <person name="Joshu C."/>
            <person name="Antonoiu B."/>
            <person name="Zidanic M."/>
            <person name="Strong C."/>
            <person name="Sun H."/>
            <person name="Lamar B."/>
            <person name="Yordan C."/>
            <person name="Ma P."/>
            <person name="Zhong J."/>
            <person name="Preston R."/>
            <person name="Vil D."/>
            <person name="Shekher M."/>
            <person name="Matero A."/>
            <person name="Shah R."/>
            <person name="Swaby I.K."/>
            <person name="O'Shaughnessy A."/>
            <person name="Rodriguez M."/>
            <person name="Hoffman J."/>
            <person name="Till S."/>
            <person name="Granat S."/>
            <person name="Shohdy N."/>
            <person name="Hasegawa A."/>
            <person name="Hameed A."/>
            <person name="Lodhi M."/>
            <person name="Johnson A."/>
            <person name="Chen E."/>
            <person name="Marra M.A."/>
            <person name="Martienssen R."/>
            <person name="McCombie W.R."/>
        </authorList>
    </citation>
    <scope>NUCLEOTIDE SEQUENCE [LARGE SCALE GENOMIC DNA]</scope>
    <source>
        <strain>cv. Columbia</strain>
    </source>
</reference>
<reference key="3">
    <citation type="journal article" date="2017" name="Plant J.">
        <title>Araport11: a complete reannotation of the Arabidopsis thaliana reference genome.</title>
        <authorList>
            <person name="Cheng C.Y."/>
            <person name="Krishnakumar V."/>
            <person name="Chan A.P."/>
            <person name="Thibaud-Nissen F."/>
            <person name="Schobel S."/>
            <person name="Town C.D."/>
        </authorList>
    </citation>
    <scope>GENOME REANNOTATION</scope>
    <source>
        <strain>cv. Columbia</strain>
    </source>
</reference>
<reference key="4">
    <citation type="journal article" date="2003" name="Science">
        <title>Empirical analysis of transcriptional activity in the Arabidopsis genome.</title>
        <authorList>
            <person name="Yamada K."/>
            <person name="Lim J."/>
            <person name="Dale J.M."/>
            <person name="Chen H."/>
            <person name="Shinn P."/>
            <person name="Palm C.J."/>
            <person name="Southwick A.M."/>
            <person name="Wu H.C."/>
            <person name="Kim C.J."/>
            <person name="Nguyen M."/>
            <person name="Pham P.K."/>
            <person name="Cheuk R.F."/>
            <person name="Karlin-Newmann G."/>
            <person name="Liu S.X."/>
            <person name="Lam B."/>
            <person name="Sakano H."/>
            <person name="Wu T."/>
            <person name="Yu G."/>
            <person name="Miranda M."/>
            <person name="Quach H.L."/>
            <person name="Tripp M."/>
            <person name="Chang C.H."/>
            <person name="Lee J.M."/>
            <person name="Toriumi M.J."/>
            <person name="Chan M.M."/>
            <person name="Tang C.C."/>
            <person name="Onodera C.S."/>
            <person name="Deng J.M."/>
            <person name="Akiyama K."/>
            <person name="Ansari Y."/>
            <person name="Arakawa T."/>
            <person name="Banh J."/>
            <person name="Banno F."/>
            <person name="Bowser L."/>
            <person name="Brooks S.Y."/>
            <person name="Carninci P."/>
            <person name="Chao Q."/>
            <person name="Choy N."/>
            <person name="Enju A."/>
            <person name="Goldsmith A.D."/>
            <person name="Gurjal M."/>
            <person name="Hansen N.F."/>
            <person name="Hayashizaki Y."/>
            <person name="Johnson-Hopson C."/>
            <person name="Hsuan V.W."/>
            <person name="Iida K."/>
            <person name="Karnes M."/>
            <person name="Khan S."/>
            <person name="Koesema E."/>
            <person name="Ishida J."/>
            <person name="Jiang P.X."/>
            <person name="Jones T."/>
            <person name="Kawai J."/>
            <person name="Kamiya A."/>
            <person name="Meyers C."/>
            <person name="Nakajima M."/>
            <person name="Narusaka M."/>
            <person name="Seki M."/>
            <person name="Sakurai T."/>
            <person name="Satou M."/>
            <person name="Tamse R."/>
            <person name="Vaysberg M."/>
            <person name="Wallender E.K."/>
            <person name="Wong C."/>
            <person name="Yamamura Y."/>
            <person name="Yuan S."/>
            <person name="Shinozaki K."/>
            <person name="Davis R.W."/>
            <person name="Theologis A."/>
            <person name="Ecker J.R."/>
        </authorList>
    </citation>
    <scope>NUCLEOTIDE SEQUENCE [LARGE SCALE MRNA]</scope>
    <source>
        <strain>cv. Columbia</strain>
    </source>
</reference>
<reference key="5">
    <citation type="journal article" date="1993" name="J. Virol.">
        <title>Effects of the tom1 mutation of Arabidopsis thaliana on the multiplication of tobacco mosaic virus RNA in protoplasts.</title>
        <authorList>
            <person name="Ishikawa M."/>
            <person name="Naito S."/>
            <person name="Ohno T."/>
        </authorList>
    </citation>
    <scope>FUNCTION</scope>
    <scope>DISRUPTION PHENOTYPE</scope>
    <source>
        <strain>cv. Columbia</strain>
    </source>
</reference>
<reference key="6">
    <citation type="journal article" date="2003" name="EMBO J.">
        <title>Arabidopsis TOBAMOVIRUS MULTIPLICATION (TOM) 2 locus encodes a transmembrane protein that interacts with TOM1.</title>
        <authorList>
            <person name="Tsujimoto Y."/>
            <person name="Numaga T."/>
            <person name="Ohshima K."/>
            <person name="Yano M.A."/>
            <person name="Ohsawa R."/>
            <person name="Goto D.B."/>
            <person name="Naito S."/>
            <person name="Ishikawa M."/>
        </authorList>
    </citation>
    <scope>INTERACTION WITH TOM2A</scope>
</reference>
<reference key="7">
    <citation type="journal article" date="2003" name="EMBO J.">
        <title>Subcellular localization of host and viral proteins associated with tobamovirus RNA replication.</title>
        <authorList>
            <person name="Hagiwara Y."/>
            <person name="Komoda K."/>
            <person name="Yamanaka T."/>
            <person name="Tamai A."/>
            <person name="Meshi T."/>
            <person name="Funada R."/>
            <person name="Tsuchiya T."/>
            <person name="Naito S."/>
            <person name="Ishikawa M."/>
        </authorList>
    </citation>
    <scope>SUBCELLULAR LOCATION</scope>
    <source>
        <strain>cv. Columbia</strain>
    </source>
</reference>
<keyword id="KW-0325">Glycoprotein</keyword>
<keyword id="KW-0945">Host-virus interaction</keyword>
<keyword id="KW-0472">Membrane</keyword>
<keyword id="KW-1185">Reference proteome</keyword>
<keyword id="KW-0812">Transmembrane</keyword>
<keyword id="KW-1133">Transmembrane helix</keyword>
<keyword id="KW-0926">Vacuole</keyword>
<proteinExistence type="evidence at protein level"/>
<dbReference type="EMBL" id="AB016924">
    <property type="protein sequence ID" value="BAB12401.1"/>
    <property type="molecule type" value="Genomic_DNA"/>
</dbReference>
<dbReference type="EMBL" id="AB016925">
    <property type="protein sequence ID" value="BAB12402.1"/>
    <property type="molecule type" value="mRNA"/>
</dbReference>
<dbReference type="EMBL" id="AL035527">
    <property type="protein sequence ID" value="CAB36823.1"/>
    <property type="status" value="ALT_SEQ"/>
    <property type="molecule type" value="Genomic_DNA"/>
</dbReference>
<dbReference type="EMBL" id="AL161555">
    <property type="protein sequence ID" value="CAB81286.1"/>
    <property type="status" value="ALT_SEQ"/>
    <property type="molecule type" value="Genomic_DNA"/>
</dbReference>
<dbReference type="EMBL" id="CP002687">
    <property type="protein sequence ID" value="AEE84503.1"/>
    <property type="molecule type" value="Genomic_DNA"/>
</dbReference>
<dbReference type="EMBL" id="AY046049">
    <property type="protein sequence ID" value="AAK76723.1"/>
    <property type="molecule type" value="mRNA"/>
</dbReference>
<dbReference type="EMBL" id="AY079319">
    <property type="protein sequence ID" value="AAL85050.1"/>
    <property type="molecule type" value="mRNA"/>
</dbReference>
<dbReference type="PIR" id="T05854">
    <property type="entry name" value="T05854"/>
</dbReference>
<dbReference type="RefSeq" id="NP_567636.1">
    <property type="nucleotide sequence ID" value="NM_118299.4"/>
</dbReference>
<dbReference type="SMR" id="Q9FEG2"/>
<dbReference type="BioGRID" id="13556">
    <property type="interactions" value="1"/>
</dbReference>
<dbReference type="FunCoup" id="Q9FEG2">
    <property type="interactions" value="751"/>
</dbReference>
<dbReference type="IntAct" id="Q9FEG2">
    <property type="interactions" value="1"/>
</dbReference>
<dbReference type="STRING" id="3702.Q9FEG2"/>
<dbReference type="GlyCosmos" id="Q9FEG2">
    <property type="glycosylation" value="2 sites, No reported glycans"/>
</dbReference>
<dbReference type="GlyGen" id="Q9FEG2">
    <property type="glycosylation" value="2 sites"/>
</dbReference>
<dbReference type="PaxDb" id="3702-AT4G21790.1"/>
<dbReference type="ProteomicsDB" id="234336"/>
<dbReference type="EnsemblPlants" id="AT4G21790.1">
    <property type="protein sequence ID" value="AT4G21790.1"/>
    <property type="gene ID" value="AT4G21790"/>
</dbReference>
<dbReference type="GeneID" id="828267"/>
<dbReference type="Gramene" id="AT4G21790.1">
    <property type="protein sequence ID" value="AT4G21790.1"/>
    <property type="gene ID" value="AT4G21790"/>
</dbReference>
<dbReference type="KEGG" id="ath:AT4G21790"/>
<dbReference type="Araport" id="AT4G21790"/>
<dbReference type="TAIR" id="AT4G21790">
    <property type="gene designation" value="TOM1"/>
</dbReference>
<dbReference type="eggNOG" id="ENOG502QQMF">
    <property type="taxonomic scope" value="Eukaryota"/>
</dbReference>
<dbReference type="HOGENOM" id="CLU_059685_0_0_1"/>
<dbReference type="InParanoid" id="Q9FEG2"/>
<dbReference type="OMA" id="LFWSQVY"/>
<dbReference type="OrthoDB" id="19798at2759"/>
<dbReference type="PhylomeDB" id="Q9FEG2"/>
<dbReference type="PRO" id="PR:Q9FEG2"/>
<dbReference type="Proteomes" id="UP000006548">
    <property type="component" value="Chromosome 4"/>
</dbReference>
<dbReference type="ExpressionAtlas" id="Q9FEG2">
    <property type="expression patterns" value="baseline and differential"/>
</dbReference>
<dbReference type="GO" id="GO:0000325">
    <property type="term" value="C:plant-type vacuole"/>
    <property type="evidence" value="ECO:0007005"/>
    <property type="project" value="TAIR"/>
</dbReference>
<dbReference type="GO" id="GO:0009705">
    <property type="term" value="C:plant-type vacuole membrane"/>
    <property type="evidence" value="ECO:0000314"/>
    <property type="project" value="UniProtKB"/>
</dbReference>
<dbReference type="GO" id="GO:0005774">
    <property type="term" value="C:vacuolar membrane"/>
    <property type="evidence" value="ECO:0000314"/>
    <property type="project" value="TAIR"/>
</dbReference>
<dbReference type="GO" id="GO:0046786">
    <property type="term" value="P:viral replication complex formation and maintenance"/>
    <property type="evidence" value="ECO:0000315"/>
    <property type="project" value="TAIR"/>
</dbReference>
<dbReference type="InterPro" id="IPR040226">
    <property type="entry name" value="THH1/TOM1/TOM3"/>
</dbReference>
<dbReference type="InterPro" id="IPR009457">
    <property type="entry name" value="THH1/TOM1/TOM3_dom"/>
</dbReference>
<dbReference type="PANTHER" id="PTHR31142:SF1">
    <property type="entry name" value="TOBAMOVIRUS MULTIPLICATION PROTEIN 1"/>
    <property type="match status" value="1"/>
</dbReference>
<dbReference type="PANTHER" id="PTHR31142">
    <property type="entry name" value="TOBAMOVIRUS MULTIPLICATION PROTEIN 1-LIKE ISOFORM X1"/>
    <property type="match status" value="1"/>
</dbReference>
<dbReference type="Pfam" id="PF06454">
    <property type="entry name" value="THH1_TOM1-3_dom"/>
    <property type="match status" value="1"/>
</dbReference>
<accession>Q9FEG2</accession>
<accession>Q9SVR8</accession>
<organism>
    <name type="scientific">Arabidopsis thaliana</name>
    <name type="common">Mouse-ear cress</name>
    <dbReference type="NCBI Taxonomy" id="3702"/>
    <lineage>
        <taxon>Eukaryota</taxon>
        <taxon>Viridiplantae</taxon>
        <taxon>Streptophyta</taxon>
        <taxon>Embryophyta</taxon>
        <taxon>Tracheophyta</taxon>
        <taxon>Spermatophyta</taxon>
        <taxon>Magnoliopsida</taxon>
        <taxon>eudicotyledons</taxon>
        <taxon>Gunneridae</taxon>
        <taxon>Pentapetalae</taxon>
        <taxon>rosids</taxon>
        <taxon>malvids</taxon>
        <taxon>Brassicales</taxon>
        <taxon>Brassicaceae</taxon>
        <taxon>Camelineae</taxon>
        <taxon>Arabidopsis</taxon>
    </lineage>
</organism>
<sequence length="291" mass="33009">MTDSGLMMPAEIAGILTTAITSWWDDVNESTQWQDGIFFALCGAYALVSAVALVQLIRIQMRVPEYGWTTQKVFHLMNFVVNGVRAVLFGFHMQVFLVHPKALCWVLLDLPGLLFFSAYTLLVLFWAEIYHQARSLPTDKLRITYISVNVAVYLAQIGIWAYIWVHDNSTVELVGKIFIAVVSFIAALGFLLYGGRLFFMLRRFPIESKGRRKKLHEVGSVTAICFTCFLIRCVVVAVSAFDKDLTLDVLDHPVLNLIYYMVVEVLPSALVLFILRKLPPKRVSAQYHPIQ</sequence>
<name>TOM1_ARATH</name>
<gene>
    <name type="primary">TOM1</name>
    <name type="synonym">PD114</name>
    <name type="ordered locus">At4g21790</name>
    <name type="ORF">F17L22.250</name>
</gene>
<evidence type="ECO:0000255" key="1"/>
<evidence type="ECO:0000269" key="2">
    <source>
    </source>
</evidence>
<evidence type="ECO:0000269" key="3">
    <source>
    </source>
</evidence>
<evidence type="ECO:0000269" key="4">
    <source>
    </source>
</evidence>
<evidence type="ECO:0000269" key="5">
    <source>
    </source>
</evidence>
<evidence type="ECO:0000305" key="6"/>
<feature type="chain" id="PRO_0000423669" description="Tobamovirus multiplication protein 1">
    <location>
        <begin position="1"/>
        <end position="291"/>
    </location>
</feature>
<feature type="topological domain" description="Cytoplasmic" evidence="1">
    <location>
        <begin position="1"/>
        <end position="3"/>
    </location>
</feature>
<feature type="transmembrane region" description="Helical" evidence="1">
    <location>
        <begin position="4"/>
        <end position="24"/>
    </location>
</feature>
<feature type="topological domain" description="Extracellular" evidence="1">
    <location>
        <begin position="25"/>
        <end position="36"/>
    </location>
</feature>
<feature type="transmembrane region" description="Helical" evidence="1">
    <location>
        <begin position="37"/>
        <end position="57"/>
    </location>
</feature>
<feature type="topological domain" description="Cytoplasmic" evidence="1">
    <location>
        <begin position="58"/>
        <end position="78"/>
    </location>
</feature>
<feature type="transmembrane region" description="Helical" evidence="1">
    <location>
        <begin position="79"/>
        <end position="99"/>
    </location>
</feature>
<feature type="topological domain" description="Extracellular" evidence="1">
    <location>
        <begin position="100"/>
        <end position="104"/>
    </location>
</feature>
<feature type="transmembrane region" description="Helical" evidence="1">
    <location>
        <begin position="105"/>
        <end position="125"/>
    </location>
</feature>
<feature type="topological domain" description="Cytoplasmic" evidence="1">
    <location>
        <begin position="126"/>
        <end position="144"/>
    </location>
</feature>
<feature type="transmembrane region" description="Helical" evidence="1">
    <location>
        <begin position="145"/>
        <end position="165"/>
    </location>
</feature>
<feature type="topological domain" description="Extracellular" evidence="1">
    <location>
        <begin position="166"/>
        <end position="172"/>
    </location>
</feature>
<feature type="transmembrane region" description="Helical" evidence="1">
    <location>
        <begin position="173"/>
        <end position="193"/>
    </location>
</feature>
<feature type="topological domain" description="Cytoplasmic" evidence="1">
    <location>
        <begin position="194"/>
        <end position="220"/>
    </location>
</feature>
<feature type="transmembrane region" description="Helical" evidence="1">
    <location>
        <begin position="221"/>
        <end position="241"/>
    </location>
</feature>
<feature type="topological domain" description="Extracellular" evidence="1">
    <location>
        <begin position="242"/>
        <end position="253"/>
    </location>
</feature>
<feature type="transmembrane region" description="Helical" evidence="1">
    <location>
        <begin position="254"/>
        <end position="274"/>
    </location>
</feature>
<feature type="topological domain" description="Cytoplasmic" evidence="1">
    <location>
        <begin position="275"/>
        <end position="291"/>
    </location>
</feature>
<feature type="glycosylation site" description="N-linked (GlcNAc...) asparagine" evidence="1">
    <location>
        <position position="28"/>
    </location>
</feature>
<feature type="glycosylation site" description="N-linked (GlcNAc...) asparagine" evidence="1">
    <location>
        <position position="168"/>
    </location>
</feature>
<protein>
    <recommendedName>
        <fullName>Tobamovirus multiplication protein 1</fullName>
        <shortName>AtTOM1</shortName>
    </recommendedName>
</protein>
<comment type="function">
    <text evidence="2 5">Necessary for the efficient intracellular multiplication of tobamoviruses, probably being a membrane anchor promoting the formation of the replication complex.</text>
</comment>
<comment type="subunit">
    <text evidence="2 3">Constituent of tobamovirus replication complex. Interacts with TOM2A and with the helicase domain of tobamovirus-encoded replication proteins.</text>
</comment>
<comment type="subcellular location">
    <subcellularLocation>
        <location evidence="2 4">Vacuole membrane</location>
        <topology evidence="2 4">Multi-pass membrane protein</topology>
    </subcellularLocation>
</comment>
<comment type="disruption phenotype">
    <text evidence="2 5">Reduced efficiency of intracellular multiplication of tobamoviruses (e.g. crucifer strain TMV-Cg), characterized by a reduced accumulation of viral coat protein (CP) and reduced amplification of TMV-related RNAs.</text>
</comment>
<comment type="similarity">
    <text evidence="6">Belongs to the plant tobamovirus multiplication TOM1 protein family.</text>
</comment>
<comment type="sequence caution" evidence="6">
    <conflict type="erroneous gene model prediction">
        <sequence resource="EMBL-CDS" id="CAB36823"/>
    </conflict>
</comment>
<comment type="sequence caution" evidence="6">
    <conflict type="erroneous gene model prediction">
        <sequence resource="EMBL-CDS" id="CAB81286"/>
    </conflict>
</comment>